<keyword id="KW-0007">Acetylation</keyword>
<keyword id="KW-1003">Cell membrane</keyword>
<keyword id="KW-0175">Coiled coil</keyword>
<keyword id="KW-0963">Cytoplasm</keyword>
<keyword id="KW-0206">Cytoskeleton</keyword>
<keyword id="KW-0325">Glycoprotein</keyword>
<keyword id="KW-0403">Intermediate filament</keyword>
<keyword id="KW-1017">Isopeptide bond</keyword>
<keyword id="KW-0472">Membrane</keyword>
<keyword id="KW-0539">Nucleus</keyword>
<keyword id="KW-0597">Phosphoprotein</keyword>
<keyword id="KW-1185">Reference proteome</keyword>
<keyword id="KW-0702">S-nitrosylation</keyword>
<keyword id="KW-0832">Ubl conjugation</keyword>
<feature type="initiator methionine" description="Removed" evidence="3">
    <location>
        <position position="1"/>
    </location>
</feature>
<feature type="chain" id="PRO_0000063751" description="Vimentin">
    <location>
        <begin position="2"/>
        <end position="466"/>
    </location>
</feature>
<feature type="domain" description="IF rod" evidence="7">
    <location>
        <begin position="103"/>
        <end position="411"/>
    </location>
</feature>
<feature type="region of interest" description="Disordered" evidence="8">
    <location>
        <begin position="1"/>
        <end position="31"/>
    </location>
</feature>
<feature type="region of interest" description="Head">
    <location>
        <begin position="2"/>
        <end position="95"/>
    </location>
</feature>
<feature type="region of interest" description="Coil 1A">
    <location>
        <begin position="96"/>
        <end position="131"/>
    </location>
</feature>
<feature type="region of interest" description="Linker 1">
    <location>
        <begin position="132"/>
        <end position="153"/>
    </location>
</feature>
<feature type="region of interest" description="Coil 1B">
    <location>
        <begin position="154"/>
        <end position="245"/>
    </location>
</feature>
<feature type="region of interest" description="Linker 12">
    <location>
        <begin position="246"/>
        <end position="268"/>
    </location>
</feature>
<feature type="region of interest" description="Coil 2">
    <location>
        <begin position="269"/>
        <end position="407"/>
    </location>
</feature>
<feature type="region of interest" description="Tail">
    <location>
        <begin position="408"/>
        <end position="466"/>
    </location>
</feature>
<feature type="coiled-coil region">
    <location>
        <begin position="96"/>
        <end position="131"/>
    </location>
</feature>
<feature type="coiled-coil region">
    <location>
        <begin position="154"/>
        <end position="245"/>
    </location>
</feature>
<feature type="coiled-coil region">
    <location>
        <begin position="303"/>
        <end position="407"/>
    </location>
</feature>
<feature type="short sequence motif" description="[IL]-x-C-x-x-[DE] motif" evidence="3">
    <location>
        <begin position="326"/>
        <end position="329"/>
    </location>
</feature>
<feature type="compositionally biased region" description="Low complexity" evidence="8">
    <location>
        <begin position="1"/>
        <end position="13"/>
    </location>
</feature>
<feature type="site" description="Stutter" evidence="1">
    <location>
        <position position="351"/>
    </location>
</feature>
<feature type="modified residue" description="N-acetylserine" evidence="3">
    <location>
        <position position="2"/>
    </location>
</feature>
<feature type="modified residue" description="Phosphoserine" evidence="3">
    <location>
        <position position="5"/>
    </location>
</feature>
<feature type="modified residue" description="Phosphoserine; by PKA and PKC; alternate" evidence="3">
    <location>
        <position position="7"/>
    </location>
</feature>
<feature type="modified residue" description="Phosphoserine" evidence="3">
    <location>
        <position position="8"/>
    </location>
</feature>
<feature type="modified residue" description="Phosphoserine; by PKC" evidence="3">
    <location>
        <position position="9"/>
    </location>
</feature>
<feature type="modified residue" description="Phosphoserine; by PKC" evidence="3">
    <location>
        <position position="10"/>
    </location>
</feature>
<feature type="modified residue" description="Phosphothreonine" evidence="3">
    <location>
        <position position="20"/>
    </location>
</feature>
<feature type="modified residue" description="Phosphoserine; by PKA and PKC" evidence="4">
    <location>
        <position position="25"/>
    </location>
</feature>
<feature type="modified residue" description="Phosphoserine; by PKC" evidence="4">
    <location>
        <position position="26"/>
    </location>
</feature>
<feature type="modified residue" description="Phosphoserine; by PKC; alternate" evidence="3">
    <location>
        <position position="34"/>
    </location>
</feature>
<feature type="modified residue" description="Phosphoserine; by CaMK2, PKA, PKC and ROCK2" evidence="3">
    <location>
        <position position="39"/>
    </location>
</feature>
<feature type="modified residue" description="Phosphoserine; by PKC" evidence="3">
    <location>
        <position position="42"/>
    </location>
</feature>
<feature type="modified residue" description="Phosphoserine" evidence="3">
    <location>
        <position position="49"/>
    </location>
</feature>
<feature type="modified residue" description="Phosphotyrosine" evidence="4">
    <location>
        <position position="53"/>
    </location>
</feature>
<feature type="modified residue" description="Phosphoserine" evidence="5">
    <location>
        <position position="55"/>
    </location>
</feature>
<feature type="modified residue" description="Phosphoserine; by CDK5 and CDK1" evidence="3">
    <location>
        <position position="56"/>
    </location>
</feature>
<feature type="modified residue" description="Phosphotyrosine" evidence="3">
    <location>
        <position position="61"/>
    </location>
</feature>
<feature type="modified residue" description="Phosphoserine; by PKA and PKC" evidence="4">
    <location>
        <position position="66"/>
    </location>
</feature>
<feature type="modified residue" description="Phosphoserine; by AURKB and ROCK2" evidence="3">
    <location>
        <position position="72"/>
    </location>
</feature>
<feature type="modified residue" description="Phosphoserine; by CaMK2" evidence="4">
    <location>
        <position position="83"/>
    </location>
</feature>
<feature type="modified residue" description="Phosphoserine" evidence="3">
    <location>
        <position position="87"/>
    </location>
</feature>
<feature type="modified residue" description="Phosphotyrosine" evidence="3">
    <location>
        <position position="117"/>
    </location>
</feature>
<feature type="modified residue" description="N6-acetyllysine; alternate" evidence="3">
    <location>
        <position position="120"/>
    </location>
</feature>
<feature type="modified residue" description="N6-succinyllysine; alternate" evidence="4">
    <location>
        <position position="120"/>
    </location>
</feature>
<feature type="modified residue" description="N6-acetyllysine; alternate" evidence="4">
    <location>
        <position position="129"/>
    </location>
</feature>
<feature type="modified residue" description="N6-succinyllysine; alternate" evidence="4">
    <location>
        <position position="129"/>
    </location>
</feature>
<feature type="modified residue" description="N6-acetyllysine; alternate" evidence="3">
    <location>
        <position position="139"/>
    </location>
</feature>
<feature type="modified residue" description="Phosphoserine" evidence="3">
    <location>
        <position position="144"/>
    </location>
</feature>
<feature type="modified residue" description="N6-acetyllysine" evidence="4">
    <location>
        <position position="168"/>
    </location>
</feature>
<feature type="modified residue" description="N6-acetyllysine; alternate" evidence="4">
    <location>
        <position position="188"/>
    </location>
</feature>
<feature type="modified residue" description="N6-succinyllysine; alternate" evidence="4">
    <location>
        <position position="188"/>
    </location>
</feature>
<feature type="modified residue" description="Phosphoserine" evidence="3">
    <location>
        <position position="214"/>
    </location>
</feature>
<feature type="modified residue" description="N6-acetyllysine; alternate" evidence="4">
    <location>
        <position position="223"/>
    </location>
</feature>
<feature type="modified residue" description="Phosphoserine" evidence="3">
    <location>
        <position position="226"/>
    </location>
</feature>
<feature type="modified residue" description="N6-acetyllysine" evidence="4">
    <location>
        <position position="235"/>
    </location>
</feature>
<feature type="modified residue" description="N6-acetyllysine; alternate" evidence="4">
    <location>
        <position position="294"/>
    </location>
</feature>
<feature type="modified residue" description="N6-succinyllysine; alternate" evidence="4">
    <location>
        <position position="294"/>
    </location>
</feature>
<feature type="modified residue" description="Phosphoserine" evidence="3">
    <location>
        <position position="299"/>
    </location>
</feature>
<feature type="modified residue" description="N6-acetyllysine; alternate" evidence="3">
    <location>
        <position position="373"/>
    </location>
</feature>
<feature type="modified residue" description="Phosphoserine" evidence="3">
    <location>
        <position position="409"/>
    </location>
</feature>
<feature type="modified residue" description="Phosphoserine" evidence="6">
    <location>
        <position position="412"/>
    </location>
</feature>
<feature type="modified residue" description="Phosphoserine" evidence="3">
    <location>
        <position position="419"/>
    </location>
</feature>
<feature type="modified residue" description="Phosphoserine" evidence="3">
    <location>
        <position position="420"/>
    </location>
</feature>
<feature type="modified residue" description="Phosphothreonine" evidence="3">
    <location>
        <position position="426"/>
    </location>
</feature>
<feature type="modified residue" description="Phosphoserine" evidence="3">
    <location>
        <position position="430"/>
    </location>
</feature>
<feature type="modified residue" description="Phosphothreonine" evidence="3">
    <location>
        <position position="436"/>
    </location>
</feature>
<feature type="modified residue" description="Phosphoserine" evidence="3">
    <location>
        <position position="438"/>
    </location>
</feature>
<feature type="modified residue" description="N6-acetyllysine; alternate" evidence="3">
    <location>
        <position position="445"/>
    </location>
</feature>
<feature type="modified residue" description="N6-succinyllysine; alternate" evidence="4">
    <location>
        <position position="445"/>
    </location>
</feature>
<feature type="modified residue" description="Phosphothreonine" evidence="3">
    <location>
        <position position="446"/>
    </location>
</feature>
<feature type="modified residue" description="Phosphothreonine" evidence="3">
    <location>
        <position position="458"/>
    </location>
</feature>
<feature type="modified residue" description="Phosphoserine" evidence="3">
    <location>
        <position position="459"/>
    </location>
</feature>
<feature type="glycosylation site" description="O-linked (GlcNAc) serine; alternate" evidence="1">
    <location>
        <position position="7"/>
    </location>
</feature>
<feature type="glycosylation site" description="O-linked (GlcNAc) threonine" evidence="1">
    <location>
        <position position="33"/>
    </location>
</feature>
<feature type="glycosylation site" description="O-linked (GlcNAc) serine; alternate" evidence="1">
    <location>
        <position position="34"/>
    </location>
</feature>
<feature type="cross-link" description="Glycyl lysine isopeptide (Lys-Gly) (interchain with G-Cter in SUMO2)" evidence="3">
    <location>
        <position position="104"/>
    </location>
</feature>
<feature type="cross-link" description="Glycyl lysine isopeptide (Lys-Gly) (interchain with G-Cter in SUMO2); alternate" evidence="3">
    <location>
        <position position="120"/>
    </location>
</feature>
<feature type="cross-link" description="Glycyl lysine isopeptide (Lys-Gly) (interchain with G-Cter in SUMO2); alternate" evidence="3">
    <location>
        <position position="129"/>
    </location>
</feature>
<feature type="cross-link" description="Glycyl lysine isopeptide (Lys-Gly) (interchain with G-Cter in SUMO2); alternate" evidence="3">
    <location>
        <position position="139"/>
    </location>
</feature>
<feature type="cross-link" description="Glycyl lysine isopeptide (Lys-Gly) (interchain with G-Cter in SUMO2); alternate" evidence="3">
    <location>
        <position position="223"/>
    </location>
</feature>
<feature type="cross-link" description="Glycyl lysine isopeptide (Lys-Gly) (interchain with G-Cter in SUMO2)" evidence="3">
    <location>
        <position position="262"/>
    </location>
</feature>
<feature type="cross-link" description="Glycyl lysine isopeptide (Lys-Gly) (interchain with G-Cter in SUMO2); alternate" evidence="3">
    <location>
        <position position="294"/>
    </location>
</feature>
<feature type="cross-link" description="Glycyl lysine isopeptide (Lys-Gly) (interchain with G-Cter in SUMO2)" evidence="3">
    <location>
        <position position="313"/>
    </location>
</feature>
<feature type="cross-link" description="Glycyl lysine isopeptide (Lys-Gly) (interchain with G-Cter in SUMO2); alternate" evidence="3">
    <location>
        <position position="373"/>
    </location>
</feature>
<feature type="cross-link" description="Glycyl lysine isopeptide (Lys-Gly) (interchain with G-Cter in SUMO2)" evidence="3">
    <location>
        <position position="439"/>
    </location>
</feature>
<feature type="cross-link" description="Glycyl lysine isopeptide (Lys-Gly) (interchain with G-Cter in SUMO1); alternate" evidence="3">
    <location>
        <position position="445"/>
    </location>
</feature>
<feature type="cross-link" description="Glycyl lysine isopeptide (Lys-Gly) (interchain with G-Cter in SUMO2); alternate" evidence="3">
    <location>
        <position position="445"/>
    </location>
</feature>
<feature type="sequence conflict" description="In Ref. 1; AAA53661." evidence="9" ref="1">
    <original>D</original>
    <variation>Q</variation>
    <location>
        <position position="148"/>
    </location>
</feature>
<feature type="sequence conflict" description="In Ref. 1; AAA53661." evidence="9" ref="1">
    <original>V</original>
    <variation>A</variation>
    <location>
        <position position="171"/>
    </location>
</feature>
<feature type="sequence conflict" description="In Ref. 1; AAA53661." evidence="9" ref="1">
    <original>D</original>
    <variation>H</variation>
    <location>
        <position position="176"/>
    </location>
</feature>
<feature type="sequence conflict" description="In Ref. 1; AAA53661." evidence="9" ref="1">
    <original>E</original>
    <variation>A</variation>
    <location>
        <position position="240"/>
    </location>
</feature>
<evidence type="ECO:0000250" key="1"/>
<evidence type="ECO:0000250" key="2">
    <source>
        <dbReference type="UniProtKB" id="A0A8C0N8E3"/>
    </source>
</evidence>
<evidence type="ECO:0000250" key="3">
    <source>
        <dbReference type="UniProtKB" id="P08670"/>
    </source>
</evidence>
<evidence type="ECO:0000250" key="4">
    <source>
        <dbReference type="UniProtKB" id="P20152"/>
    </source>
</evidence>
<evidence type="ECO:0000250" key="5">
    <source>
        <dbReference type="UniProtKB" id="P31000"/>
    </source>
</evidence>
<evidence type="ECO:0000250" key="6">
    <source>
        <dbReference type="UniProtKB" id="P84198"/>
    </source>
</evidence>
<evidence type="ECO:0000255" key="7">
    <source>
        <dbReference type="PROSITE-ProRule" id="PRU01188"/>
    </source>
</evidence>
<evidence type="ECO:0000256" key="8">
    <source>
        <dbReference type="SAM" id="MobiDB-lite"/>
    </source>
</evidence>
<evidence type="ECO:0000305" key="9"/>
<protein>
    <recommendedName>
        <fullName>Vimentin</fullName>
    </recommendedName>
</protein>
<gene>
    <name type="primary">VIM</name>
</gene>
<proteinExistence type="evidence at protein level"/>
<accession>P48616</accession>
<accession>Q17QM7</accession>
<dbReference type="EMBL" id="L13263">
    <property type="protein sequence ID" value="AAA53661.1"/>
    <property type="molecule type" value="mRNA"/>
</dbReference>
<dbReference type="EMBL" id="BC118269">
    <property type="protein sequence ID" value="AAI18270.1"/>
    <property type="molecule type" value="mRNA"/>
</dbReference>
<dbReference type="RefSeq" id="NP_776394.2">
    <property type="nucleotide sequence ID" value="NM_173969.3"/>
</dbReference>
<dbReference type="SMR" id="P48616"/>
<dbReference type="FunCoup" id="P48616">
    <property type="interactions" value="943"/>
</dbReference>
<dbReference type="IntAct" id="P48616">
    <property type="interactions" value="3"/>
</dbReference>
<dbReference type="MINT" id="P48616"/>
<dbReference type="STRING" id="9913.ENSBTAP00000024572"/>
<dbReference type="GlyCosmos" id="P48616">
    <property type="glycosylation" value="3 sites, No reported glycans"/>
</dbReference>
<dbReference type="GlyGen" id="P48616">
    <property type="glycosylation" value="3 sites"/>
</dbReference>
<dbReference type="iPTMnet" id="P48616"/>
<dbReference type="SwissPalm" id="P48616"/>
<dbReference type="PaxDb" id="9913-ENSBTAP00000024572"/>
<dbReference type="PeptideAtlas" id="P48616"/>
<dbReference type="Ensembl" id="ENSBTAT00000024572.4">
    <property type="protein sequence ID" value="ENSBTAP00000024572.3"/>
    <property type="gene ID" value="ENSBTAG00000018463.4"/>
</dbReference>
<dbReference type="GeneID" id="280955"/>
<dbReference type="KEGG" id="bta:280955"/>
<dbReference type="CTD" id="7431"/>
<dbReference type="VEuPathDB" id="HostDB:ENSBTAG00000018463"/>
<dbReference type="VGNC" id="VGNC:36796">
    <property type="gene designation" value="VIM"/>
</dbReference>
<dbReference type="eggNOG" id="KOG0977">
    <property type="taxonomic scope" value="Eukaryota"/>
</dbReference>
<dbReference type="GeneTree" id="ENSGT00940000156146"/>
<dbReference type="HOGENOM" id="CLU_012560_7_4_1"/>
<dbReference type="InParanoid" id="P48616"/>
<dbReference type="OMA" id="GGMYATK"/>
<dbReference type="OrthoDB" id="2441647at2759"/>
<dbReference type="TreeFam" id="TF330122"/>
<dbReference type="Reactome" id="R-BTA-264870">
    <property type="pathway name" value="Caspase-mediated cleavage of cytoskeletal proteins"/>
</dbReference>
<dbReference type="Reactome" id="R-BTA-390522">
    <property type="pathway name" value="Striated Muscle Contraction"/>
</dbReference>
<dbReference type="Reactome" id="R-BTA-9013422">
    <property type="pathway name" value="RHOBTB1 GTPase cycle"/>
</dbReference>
<dbReference type="Reactome" id="R-BTA-9646399">
    <property type="pathway name" value="Aggrephagy"/>
</dbReference>
<dbReference type="CD-CODE" id="D7FE2080">
    <property type="entry name" value="Nucleolus"/>
</dbReference>
<dbReference type="Proteomes" id="UP000009136">
    <property type="component" value="Chromosome 13"/>
</dbReference>
<dbReference type="Bgee" id="ENSBTAG00000018463">
    <property type="expression patterns" value="Expressed in bone marrow and 106 other cell types or tissues"/>
</dbReference>
<dbReference type="GO" id="GO:0030424">
    <property type="term" value="C:axon"/>
    <property type="evidence" value="ECO:0000318"/>
    <property type="project" value="GO_Central"/>
</dbReference>
<dbReference type="GO" id="GO:0031252">
    <property type="term" value="C:cell leading edge"/>
    <property type="evidence" value="ECO:0007669"/>
    <property type="project" value="Ensembl"/>
</dbReference>
<dbReference type="GO" id="GO:0005737">
    <property type="term" value="C:cytoplasm"/>
    <property type="evidence" value="ECO:0000250"/>
    <property type="project" value="UniProtKB"/>
</dbReference>
<dbReference type="GO" id="GO:0005829">
    <property type="term" value="C:cytosol"/>
    <property type="evidence" value="ECO:0007669"/>
    <property type="project" value="Ensembl"/>
</dbReference>
<dbReference type="GO" id="GO:0005882">
    <property type="term" value="C:intermediate filament"/>
    <property type="evidence" value="ECO:0000250"/>
    <property type="project" value="UniProtKB"/>
</dbReference>
<dbReference type="GO" id="GO:0016363">
    <property type="term" value="C:nuclear matrix"/>
    <property type="evidence" value="ECO:0007669"/>
    <property type="project" value="UniProtKB-SubCell"/>
</dbReference>
<dbReference type="GO" id="GO:0005634">
    <property type="term" value="C:nucleus"/>
    <property type="evidence" value="ECO:0000314"/>
    <property type="project" value="AgBase"/>
</dbReference>
<dbReference type="GO" id="GO:0005777">
    <property type="term" value="C:peroxisome"/>
    <property type="evidence" value="ECO:0007669"/>
    <property type="project" value="Ensembl"/>
</dbReference>
<dbReference type="GO" id="GO:0045335">
    <property type="term" value="C:phagocytic vesicle"/>
    <property type="evidence" value="ECO:0007669"/>
    <property type="project" value="Ensembl"/>
</dbReference>
<dbReference type="GO" id="GO:0005886">
    <property type="term" value="C:plasma membrane"/>
    <property type="evidence" value="ECO:0000250"/>
    <property type="project" value="UniProtKB"/>
</dbReference>
<dbReference type="GO" id="GO:0003725">
    <property type="term" value="F:double-stranded RNA binding"/>
    <property type="evidence" value="ECO:0007669"/>
    <property type="project" value="Ensembl"/>
</dbReference>
<dbReference type="GO" id="GO:0042802">
    <property type="term" value="F:identical protein binding"/>
    <property type="evidence" value="ECO:0007669"/>
    <property type="project" value="Ensembl"/>
</dbReference>
<dbReference type="GO" id="GO:1990254">
    <property type="term" value="F:keratin filament binding"/>
    <property type="evidence" value="ECO:0007669"/>
    <property type="project" value="Ensembl"/>
</dbReference>
<dbReference type="GO" id="GO:0019904">
    <property type="term" value="F:protein domain specific binding"/>
    <property type="evidence" value="ECO:0007669"/>
    <property type="project" value="Ensembl"/>
</dbReference>
<dbReference type="GO" id="GO:0097110">
    <property type="term" value="F:scaffold protein binding"/>
    <property type="evidence" value="ECO:0007669"/>
    <property type="project" value="Ensembl"/>
</dbReference>
<dbReference type="GO" id="GO:0005200">
    <property type="term" value="F:structural constituent of cytoskeleton"/>
    <property type="evidence" value="ECO:0000250"/>
    <property type="project" value="UniProtKB"/>
</dbReference>
<dbReference type="GO" id="GO:0005212">
    <property type="term" value="F:structural constituent of eye lens"/>
    <property type="evidence" value="ECO:0007669"/>
    <property type="project" value="Ensembl"/>
</dbReference>
<dbReference type="GO" id="GO:0014002">
    <property type="term" value="P:astrocyte development"/>
    <property type="evidence" value="ECO:0007669"/>
    <property type="project" value="Ensembl"/>
</dbReference>
<dbReference type="GO" id="GO:0060020">
    <property type="term" value="P:Bergmann glial cell differentiation"/>
    <property type="evidence" value="ECO:0007669"/>
    <property type="project" value="Ensembl"/>
</dbReference>
<dbReference type="GO" id="GO:0071222">
    <property type="term" value="P:cellular response to lipopolysaccharide"/>
    <property type="evidence" value="ECO:0000250"/>
    <property type="project" value="UniProtKB"/>
</dbReference>
<dbReference type="GO" id="GO:0071225">
    <property type="term" value="P:cellular response to muramyl dipeptide"/>
    <property type="evidence" value="ECO:0000250"/>
    <property type="project" value="UniProtKB"/>
</dbReference>
<dbReference type="GO" id="GO:0071346">
    <property type="term" value="P:cellular response to type II interferon"/>
    <property type="evidence" value="ECO:0007669"/>
    <property type="project" value="Ensembl"/>
</dbReference>
<dbReference type="GO" id="GO:0001701">
    <property type="term" value="P:in utero embryonic development"/>
    <property type="evidence" value="ECO:0000304"/>
    <property type="project" value="AgBase"/>
</dbReference>
<dbReference type="GO" id="GO:0045109">
    <property type="term" value="P:intermediate filament organization"/>
    <property type="evidence" value="ECO:0000250"/>
    <property type="project" value="UniProtKB"/>
</dbReference>
<dbReference type="GO" id="GO:0070307">
    <property type="term" value="P:lens fiber cell development"/>
    <property type="evidence" value="ECO:0007669"/>
    <property type="project" value="Ensembl"/>
</dbReference>
<dbReference type="GO" id="GO:0010977">
    <property type="term" value="P:negative regulation of neuron projection development"/>
    <property type="evidence" value="ECO:0007669"/>
    <property type="project" value="Ensembl"/>
</dbReference>
<dbReference type="GO" id="GO:0031175">
    <property type="term" value="P:neuron projection development"/>
    <property type="evidence" value="ECO:0007669"/>
    <property type="project" value="Ensembl"/>
</dbReference>
<dbReference type="GO" id="GO:0032967">
    <property type="term" value="P:positive regulation of collagen biosynthetic process"/>
    <property type="evidence" value="ECO:0007669"/>
    <property type="project" value="Ensembl"/>
</dbReference>
<dbReference type="GO" id="GO:0010634">
    <property type="term" value="P:positive regulation of epithelial cell migration"/>
    <property type="evidence" value="ECO:0000250"/>
    <property type="project" value="UniProtKB"/>
</dbReference>
<dbReference type="GO" id="GO:0010628">
    <property type="term" value="P:positive regulation of gene expression"/>
    <property type="evidence" value="ECO:0007669"/>
    <property type="project" value="Ensembl"/>
</dbReference>
<dbReference type="GO" id="GO:0032930">
    <property type="term" value="P:positive regulation of superoxide anion generation"/>
    <property type="evidence" value="ECO:0000314"/>
    <property type="project" value="ARUK-UCL"/>
</dbReference>
<dbReference type="GO" id="GO:0043488">
    <property type="term" value="P:regulation of mRNA stability"/>
    <property type="evidence" value="ECO:0007669"/>
    <property type="project" value="Ensembl"/>
</dbReference>
<dbReference type="FunFam" id="1.20.5.1160:FF:000001">
    <property type="entry name" value="Keratin type II"/>
    <property type="match status" value="1"/>
</dbReference>
<dbReference type="FunFam" id="1.20.5.170:FF:000002">
    <property type="entry name" value="Type I keratin KA11"/>
    <property type="match status" value="1"/>
</dbReference>
<dbReference type="FunFam" id="1.20.5.500:FF:000001">
    <property type="entry name" value="Type II keratin 23"/>
    <property type="match status" value="1"/>
</dbReference>
<dbReference type="Gene3D" id="1.20.5.170">
    <property type="match status" value="1"/>
</dbReference>
<dbReference type="Gene3D" id="1.20.5.500">
    <property type="entry name" value="Single helix bin"/>
    <property type="match status" value="1"/>
</dbReference>
<dbReference type="Gene3D" id="1.20.5.1160">
    <property type="entry name" value="Vasodilator-stimulated phosphoprotein"/>
    <property type="match status" value="1"/>
</dbReference>
<dbReference type="InterPro" id="IPR018039">
    <property type="entry name" value="IF_conserved"/>
</dbReference>
<dbReference type="InterPro" id="IPR039008">
    <property type="entry name" value="IF_rod_dom"/>
</dbReference>
<dbReference type="InterPro" id="IPR006821">
    <property type="entry name" value="Intermed_filament_DNA-bd"/>
</dbReference>
<dbReference type="InterPro" id="IPR050405">
    <property type="entry name" value="Intermediate_filament"/>
</dbReference>
<dbReference type="PANTHER" id="PTHR45652">
    <property type="entry name" value="GLIAL FIBRILLARY ACIDIC PROTEIN"/>
    <property type="match status" value="1"/>
</dbReference>
<dbReference type="PANTHER" id="PTHR45652:SF5">
    <property type="entry name" value="VIMENTIN"/>
    <property type="match status" value="1"/>
</dbReference>
<dbReference type="Pfam" id="PF00038">
    <property type="entry name" value="Filament"/>
    <property type="match status" value="1"/>
</dbReference>
<dbReference type="Pfam" id="PF04732">
    <property type="entry name" value="Filament_head"/>
    <property type="match status" value="1"/>
</dbReference>
<dbReference type="SMART" id="SM01391">
    <property type="entry name" value="Filament"/>
    <property type="match status" value="1"/>
</dbReference>
<dbReference type="SUPFAM" id="SSF64593">
    <property type="entry name" value="Intermediate filament protein, coiled coil region"/>
    <property type="match status" value="2"/>
</dbReference>
<dbReference type="PROSITE" id="PS00226">
    <property type="entry name" value="IF_ROD_1"/>
    <property type="match status" value="1"/>
</dbReference>
<dbReference type="PROSITE" id="PS51842">
    <property type="entry name" value="IF_ROD_2"/>
    <property type="match status" value="1"/>
</dbReference>
<name>VIME_BOVIN</name>
<reference key="1">
    <citation type="journal article" date="1994" name="Gene">
        <title>Nucleotide sequence of the bovine vimentin-encoding cDNA.</title>
        <authorList>
            <person name="Hess J.F."/>
            <person name="Casselman J.T."/>
            <person name="FitzGerald P.G."/>
        </authorList>
    </citation>
    <scope>NUCLEOTIDE SEQUENCE [MRNA]</scope>
</reference>
<reference key="2">
    <citation type="submission" date="2006-06" db="EMBL/GenBank/DDBJ databases">
        <authorList>
            <consortium name="NIH - Mammalian Gene Collection (MGC) project"/>
        </authorList>
    </citation>
    <scope>NUCLEOTIDE SEQUENCE [LARGE SCALE MRNA]</scope>
    <source>
        <strain>Hereford</strain>
        <tissue>Basal ganglia</tissue>
    </source>
</reference>
<organism>
    <name type="scientific">Bos taurus</name>
    <name type="common">Bovine</name>
    <dbReference type="NCBI Taxonomy" id="9913"/>
    <lineage>
        <taxon>Eukaryota</taxon>
        <taxon>Metazoa</taxon>
        <taxon>Chordata</taxon>
        <taxon>Craniata</taxon>
        <taxon>Vertebrata</taxon>
        <taxon>Euteleostomi</taxon>
        <taxon>Mammalia</taxon>
        <taxon>Eutheria</taxon>
        <taxon>Laurasiatheria</taxon>
        <taxon>Artiodactyla</taxon>
        <taxon>Ruminantia</taxon>
        <taxon>Pecora</taxon>
        <taxon>Bovidae</taxon>
        <taxon>Bovinae</taxon>
        <taxon>Bos</taxon>
    </lineage>
</organism>
<sequence length="466" mass="53728">MSTRSVSSSSYRRMFGGPGTASRPSSTRSYVTTSTRTYSLGSALRPTTSRTLYTSSPGGVYATRSSAVRLRSGVPGVRLLQDSVDFSLADAINTEFKNTRTNEKVELQELNDRFANYIDKVRFLEQQNKILLAELEQLKGQGKSRLGDLYEEEMRELRRQVDQLTNDKARVEVERDNLAEDIMRLREKLQEEMLQREEAESTLQSFRQDVDNASLARLDLERKVESLQEEIAFLKKLHDEEIQELQAQIQEQHVQIDMDVSKPDLTAALRDVRQQYESVAAKNLQEAEEWYKSKFADLSEAANRNNDALRQAKQESNEYRRQVQTLTCEVDALKGTNESLERQMREMEENFSVEAANYQDTIGRLQDEIQNMKEEMARHLREYQDLLNVKMALDIEIATYRKLLEGEESRISLPLPNFSSLNLRETNLDSLPLVDTHSKRTLLIKTVETRDGQVINETSQHHDDLE</sequence>
<comment type="function">
    <text evidence="2 5">Vimentins are class-III intermediate filaments found in various non-epithelial cells, especially mesenchymal cells. Vimentin is attached to the nucleus, endoplasmic reticulum, and mitochondria, either laterally or terminally. Plays a role in cell directional movement, orientation, cell sheet organization and Golgi complex polarization at the cell migration front (By similarity). Protects SCRIB from proteasomal degradation and facilitates its localization to intermediate filaments in a cell contact-mediated manner (By similarity).</text>
</comment>
<comment type="function">
    <text evidence="3">Involved with LARP6 in the stabilization of type I collagen mRNAs for CO1A1 and CO1A2.</text>
</comment>
<comment type="subunit">
    <text evidence="3 4 5">Homomer assembled from elementary dimers (By similarity). Identified in complexes that contain VIM, EZR, AHNAK, BFSP1, BFSP2, ANK2, PLEC, PRX and spectrin (By similarity). Interacts with BCAS3 (By similarity). Interacts with LGSN (By similarity). Interacts with SYNM (By similarity). Interacts (via rod region) with PLEC (via CH 1 domain) (By similarity). Interacts with STK33 (By similarity). Interacts with LARP6 (By similarity). Interacts with RAB8B (By similarity). Interacts with TOR1A; the interaction associates TOR1A with the cytoskeleton. Interacts with TOR1AIP1 (By similarity). Interacts with TOR1AIP1 (By similarity). Interacts with DIAPH1 (By similarity). Interacts with EPPK1; interaction is dependent of higher-order structure of intermediate filament (By similarity). Interacts with the non-receptor tyrosine kinase SRMS; the interaction leads to phosphorylation of VIM (By similarity). Interacts with NOD2 (By similarity). Interacts (via head region) with CORO1C (By similarity). Interacts with HDGF (By similarity). Interacts with PRKCE (via phorbol-ester/DAG-type 2 domain) (By similarity). Interacts with BFSP2 (By similarity). Interacts with PPL (By similarity). Interacts with PKP1 and PKP2 (By similarity). Interacts with SCRIB (via PDZ domains); the interaction protects SCRIB from proteasomal degradation and facilitates SCRIB localization to intermediate filaments, the interaction is reduced by cell contact inhibition (By similarity).</text>
</comment>
<comment type="interaction">
    <interactant intactId="EBI-1221453">
        <id>P48616</id>
    </interactant>
    <interactant intactId="EBI-8537762">
        <id>P18341</id>
        <label>TGFB1</label>
    </interactant>
    <organismsDiffer>false</organismsDiffer>
    <experiments>2</experiments>
</comment>
<comment type="subcellular location">
    <subcellularLocation>
        <location evidence="3">Cytoplasm</location>
    </subcellularLocation>
    <subcellularLocation>
        <location evidence="3">Cytoplasm</location>
        <location evidence="3">Cytoskeleton</location>
    </subcellularLocation>
    <subcellularLocation>
        <location evidence="5">Nucleus matrix</location>
    </subcellularLocation>
    <subcellularLocation>
        <location evidence="4">Cell membrane</location>
    </subcellularLocation>
</comment>
<comment type="domain">
    <text evidence="3">The central alpha-helical coiled-coil IF rod domain mediates elementary homodimerization.</text>
</comment>
<comment type="domain">
    <text evidence="3">The [IL]-x-C-x-x-[DE] motif is a proposed target motif for cysteine S-nitrosylation mediated by the iNOS-S100A8/A9 transnitrosylase complex.</text>
</comment>
<comment type="PTM">
    <text evidence="3 5">One of the most prominent phosphoproteins in various cells of mesenchymal origin. Phosphorylation is enhanced during cell division, at which time vimentin filaments are significantly reorganized. Phosphorylation by PKN1 inhibits the formation of filaments. Filament disassembly during mitosis is promoted by phosphorylation at Ser-55 as well as by nestin. Phosphorylated at Ser-56 by CDK5 during neutrophil secretion in the cytoplasm. Phosphorylated by STK33. Phosphorylated on tyrosine residues by SRMS.</text>
</comment>
<comment type="PTM">
    <text evidence="3">S-nitrosylation is induced by interferon-gamma and oxidatively-modified low-densitity lipoprotein (LDL(ox)) possibly implicating the iNOS-S100A8/9 transnitrosylase complex.</text>
</comment>
<comment type="similarity">
    <text evidence="7">Belongs to the intermediate filament family.</text>
</comment>